<reference key="1">
    <citation type="journal article" date="2004" name="J. Bacteriol.">
        <title>Comparative genomics of two Leptospira interrogans serovars reveals novel insights into physiology and pathogenesis.</title>
        <authorList>
            <person name="Nascimento A.L.T.O."/>
            <person name="Ko A.I."/>
            <person name="Martins E.A.L."/>
            <person name="Monteiro-Vitorello C.B."/>
            <person name="Ho P.L."/>
            <person name="Haake D.A."/>
            <person name="Verjovski-Almeida S."/>
            <person name="Hartskeerl R.A."/>
            <person name="Marques M.V."/>
            <person name="Oliveira M.C."/>
            <person name="Menck C.F.M."/>
            <person name="Leite L.C.C."/>
            <person name="Carrer H."/>
            <person name="Coutinho L.L."/>
            <person name="Degrave W.M."/>
            <person name="Dellagostin O.A."/>
            <person name="El-Dorry H."/>
            <person name="Ferro E.S."/>
            <person name="Ferro M.I.T."/>
            <person name="Furlan L.R."/>
            <person name="Gamberini M."/>
            <person name="Giglioti E.A."/>
            <person name="Goes-Neto A."/>
            <person name="Goldman G.H."/>
            <person name="Goldman M.H.S."/>
            <person name="Harakava R."/>
            <person name="Jeronimo S.M.B."/>
            <person name="Junqueira-de-Azevedo I.L.M."/>
            <person name="Kimura E.T."/>
            <person name="Kuramae E.E."/>
            <person name="Lemos E.G.M."/>
            <person name="Lemos M.V.F."/>
            <person name="Marino C.L."/>
            <person name="Nunes L.R."/>
            <person name="de Oliveira R.C."/>
            <person name="Pereira G.G."/>
            <person name="Reis M.S."/>
            <person name="Schriefer A."/>
            <person name="Siqueira W.J."/>
            <person name="Sommer P."/>
            <person name="Tsai S.M."/>
            <person name="Simpson A.J.G."/>
            <person name="Ferro J.A."/>
            <person name="Camargo L.E.A."/>
            <person name="Kitajima J.P."/>
            <person name="Setubal J.C."/>
            <person name="Van Sluys M.A."/>
        </authorList>
    </citation>
    <scope>NUCLEOTIDE SEQUENCE [LARGE SCALE GENOMIC DNA]</scope>
    <source>
        <strain>Fiocruz L1-130</strain>
    </source>
</reference>
<protein>
    <recommendedName>
        <fullName evidence="1">Carbamoyl phosphate synthase small chain</fullName>
        <ecNumber evidence="1">6.3.5.5</ecNumber>
    </recommendedName>
    <alternativeName>
        <fullName evidence="1">Carbamoyl phosphate synthetase glutamine chain</fullName>
    </alternativeName>
</protein>
<name>CARA_LEPIC</name>
<proteinExistence type="inferred from homology"/>
<dbReference type="EC" id="6.3.5.5" evidence="1"/>
<dbReference type="EMBL" id="AE016823">
    <property type="protein sequence ID" value="AAS71031.1"/>
    <property type="molecule type" value="Genomic_DNA"/>
</dbReference>
<dbReference type="SMR" id="Q72PK5"/>
<dbReference type="KEGG" id="lic:LIC_12466"/>
<dbReference type="HOGENOM" id="CLU_035901_1_1_12"/>
<dbReference type="UniPathway" id="UPA00068">
    <property type="reaction ID" value="UER00171"/>
</dbReference>
<dbReference type="UniPathway" id="UPA00070">
    <property type="reaction ID" value="UER00115"/>
</dbReference>
<dbReference type="Proteomes" id="UP000007037">
    <property type="component" value="Chromosome I"/>
</dbReference>
<dbReference type="GO" id="GO:0005524">
    <property type="term" value="F:ATP binding"/>
    <property type="evidence" value="ECO:0007669"/>
    <property type="project" value="UniProtKB-UniRule"/>
</dbReference>
<dbReference type="GO" id="GO:0004088">
    <property type="term" value="F:carbamoyl-phosphate synthase (glutamine-hydrolyzing) activity"/>
    <property type="evidence" value="ECO:0007669"/>
    <property type="project" value="UniProtKB-UniRule"/>
</dbReference>
<dbReference type="GO" id="GO:0004359">
    <property type="term" value="F:glutaminase activity"/>
    <property type="evidence" value="ECO:0007669"/>
    <property type="project" value="RHEA"/>
</dbReference>
<dbReference type="GO" id="GO:0006207">
    <property type="term" value="P:'de novo' pyrimidine nucleobase biosynthetic process"/>
    <property type="evidence" value="ECO:0007669"/>
    <property type="project" value="InterPro"/>
</dbReference>
<dbReference type="GO" id="GO:0044205">
    <property type="term" value="P:'de novo' UMP biosynthetic process"/>
    <property type="evidence" value="ECO:0007669"/>
    <property type="project" value="UniProtKB-UniRule"/>
</dbReference>
<dbReference type="GO" id="GO:0006541">
    <property type="term" value="P:glutamine metabolic process"/>
    <property type="evidence" value="ECO:0007669"/>
    <property type="project" value="InterPro"/>
</dbReference>
<dbReference type="GO" id="GO:0006526">
    <property type="term" value="P:L-arginine biosynthetic process"/>
    <property type="evidence" value="ECO:0007669"/>
    <property type="project" value="UniProtKB-UniRule"/>
</dbReference>
<dbReference type="CDD" id="cd01744">
    <property type="entry name" value="GATase1_CPSase"/>
    <property type="match status" value="1"/>
</dbReference>
<dbReference type="FunFam" id="3.40.50.880:FF:000065">
    <property type="entry name" value="Carbamoyl-phosphate synthase small chain"/>
    <property type="match status" value="1"/>
</dbReference>
<dbReference type="FunFam" id="3.50.30.20:FF:000001">
    <property type="entry name" value="Carbamoyl-phosphate synthase small chain"/>
    <property type="match status" value="1"/>
</dbReference>
<dbReference type="Gene3D" id="3.40.50.880">
    <property type="match status" value="1"/>
</dbReference>
<dbReference type="Gene3D" id="3.50.30.20">
    <property type="entry name" value="Carbamoyl-phosphate synthase small subunit, N-terminal domain"/>
    <property type="match status" value="1"/>
</dbReference>
<dbReference type="HAMAP" id="MF_01209">
    <property type="entry name" value="CPSase_S_chain"/>
    <property type="match status" value="1"/>
</dbReference>
<dbReference type="InterPro" id="IPR050472">
    <property type="entry name" value="Anth_synth/Amidotransfase"/>
</dbReference>
<dbReference type="InterPro" id="IPR006274">
    <property type="entry name" value="CarbamoylP_synth_ssu"/>
</dbReference>
<dbReference type="InterPro" id="IPR002474">
    <property type="entry name" value="CarbamoylP_synth_ssu_N"/>
</dbReference>
<dbReference type="InterPro" id="IPR036480">
    <property type="entry name" value="CarbP_synth_ssu_N_sf"/>
</dbReference>
<dbReference type="InterPro" id="IPR029062">
    <property type="entry name" value="Class_I_gatase-like"/>
</dbReference>
<dbReference type="InterPro" id="IPR035686">
    <property type="entry name" value="CPSase_GATase1"/>
</dbReference>
<dbReference type="InterPro" id="IPR017926">
    <property type="entry name" value="GATASE"/>
</dbReference>
<dbReference type="NCBIfam" id="TIGR01368">
    <property type="entry name" value="CPSaseIIsmall"/>
    <property type="match status" value="1"/>
</dbReference>
<dbReference type="NCBIfam" id="NF009475">
    <property type="entry name" value="PRK12838.1"/>
    <property type="match status" value="1"/>
</dbReference>
<dbReference type="PANTHER" id="PTHR43418:SF7">
    <property type="entry name" value="CARBAMOYL-PHOSPHATE SYNTHASE SMALL CHAIN"/>
    <property type="match status" value="1"/>
</dbReference>
<dbReference type="PANTHER" id="PTHR43418">
    <property type="entry name" value="MULTIFUNCTIONAL TRYPTOPHAN BIOSYNTHESIS PROTEIN-RELATED"/>
    <property type="match status" value="1"/>
</dbReference>
<dbReference type="Pfam" id="PF00988">
    <property type="entry name" value="CPSase_sm_chain"/>
    <property type="match status" value="1"/>
</dbReference>
<dbReference type="Pfam" id="PF00117">
    <property type="entry name" value="GATase"/>
    <property type="match status" value="1"/>
</dbReference>
<dbReference type="PRINTS" id="PR00097">
    <property type="entry name" value="ANTSNTHASEII"/>
</dbReference>
<dbReference type="PRINTS" id="PR00099">
    <property type="entry name" value="CPSGATASE"/>
</dbReference>
<dbReference type="PRINTS" id="PR00096">
    <property type="entry name" value="GATASE"/>
</dbReference>
<dbReference type="SMART" id="SM01097">
    <property type="entry name" value="CPSase_sm_chain"/>
    <property type="match status" value="1"/>
</dbReference>
<dbReference type="SUPFAM" id="SSF52021">
    <property type="entry name" value="Carbamoyl phosphate synthetase, small subunit N-terminal domain"/>
    <property type="match status" value="1"/>
</dbReference>
<dbReference type="SUPFAM" id="SSF52317">
    <property type="entry name" value="Class I glutamine amidotransferase-like"/>
    <property type="match status" value="1"/>
</dbReference>
<dbReference type="PROSITE" id="PS51273">
    <property type="entry name" value="GATASE_TYPE_1"/>
    <property type="match status" value="1"/>
</dbReference>
<accession>Q72PK5</accession>
<evidence type="ECO:0000255" key="1">
    <source>
        <dbReference type="HAMAP-Rule" id="MF_01209"/>
    </source>
</evidence>
<feature type="chain" id="PRO_0000112288" description="Carbamoyl phosphate synthase small chain">
    <location>
        <begin position="1"/>
        <end position="363"/>
    </location>
</feature>
<feature type="domain" description="Glutamine amidotransferase type-1" evidence="1">
    <location>
        <begin position="177"/>
        <end position="363"/>
    </location>
</feature>
<feature type="region of interest" description="CPSase" evidence="1">
    <location>
        <begin position="1"/>
        <end position="173"/>
    </location>
</feature>
<feature type="active site" description="Nucleophile" evidence="1">
    <location>
        <position position="253"/>
    </location>
</feature>
<feature type="active site" evidence="1">
    <location>
        <position position="336"/>
    </location>
</feature>
<feature type="active site" evidence="1">
    <location>
        <position position="338"/>
    </location>
</feature>
<feature type="binding site" evidence="1">
    <location>
        <position position="46"/>
    </location>
    <ligand>
        <name>L-glutamine</name>
        <dbReference type="ChEBI" id="CHEBI:58359"/>
    </ligand>
</feature>
<feature type="binding site" evidence="1">
    <location>
        <position position="225"/>
    </location>
    <ligand>
        <name>L-glutamine</name>
        <dbReference type="ChEBI" id="CHEBI:58359"/>
    </ligand>
</feature>
<feature type="binding site" evidence="1">
    <location>
        <position position="227"/>
    </location>
    <ligand>
        <name>L-glutamine</name>
        <dbReference type="ChEBI" id="CHEBI:58359"/>
    </ligand>
</feature>
<feature type="binding site" evidence="1">
    <location>
        <position position="254"/>
    </location>
    <ligand>
        <name>L-glutamine</name>
        <dbReference type="ChEBI" id="CHEBI:58359"/>
    </ligand>
</feature>
<feature type="binding site" evidence="1">
    <location>
        <position position="257"/>
    </location>
    <ligand>
        <name>L-glutamine</name>
        <dbReference type="ChEBI" id="CHEBI:58359"/>
    </ligand>
</feature>
<feature type="binding site" evidence="1">
    <location>
        <position position="295"/>
    </location>
    <ligand>
        <name>L-glutamine</name>
        <dbReference type="ChEBI" id="CHEBI:58359"/>
    </ligand>
</feature>
<feature type="binding site" evidence="1">
    <location>
        <position position="297"/>
    </location>
    <ligand>
        <name>L-glutamine</name>
        <dbReference type="ChEBI" id="CHEBI:58359"/>
    </ligand>
</feature>
<feature type="binding site" evidence="1">
    <location>
        <position position="298"/>
    </location>
    <ligand>
        <name>L-glutamine</name>
        <dbReference type="ChEBI" id="CHEBI:58359"/>
    </ligand>
</feature>
<comment type="function">
    <text evidence="1">Small subunit of the glutamine-dependent carbamoyl phosphate synthetase (CPSase). CPSase catalyzes the formation of carbamoyl phosphate from the ammonia moiety of glutamine, carbonate, and phosphate donated by ATP, constituting the first step of 2 biosynthetic pathways, one leading to arginine and/or urea and the other to pyrimidine nucleotides. The small subunit (glutamine amidotransferase) binds and cleaves glutamine to supply the large subunit with the substrate ammonia.</text>
</comment>
<comment type="catalytic activity">
    <reaction evidence="1">
        <text>hydrogencarbonate + L-glutamine + 2 ATP + H2O = carbamoyl phosphate + L-glutamate + 2 ADP + phosphate + 2 H(+)</text>
        <dbReference type="Rhea" id="RHEA:18633"/>
        <dbReference type="ChEBI" id="CHEBI:15377"/>
        <dbReference type="ChEBI" id="CHEBI:15378"/>
        <dbReference type="ChEBI" id="CHEBI:17544"/>
        <dbReference type="ChEBI" id="CHEBI:29985"/>
        <dbReference type="ChEBI" id="CHEBI:30616"/>
        <dbReference type="ChEBI" id="CHEBI:43474"/>
        <dbReference type="ChEBI" id="CHEBI:58228"/>
        <dbReference type="ChEBI" id="CHEBI:58359"/>
        <dbReference type="ChEBI" id="CHEBI:456216"/>
        <dbReference type="EC" id="6.3.5.5"/>
    </reaction>
</comment>
<comment type="catalytic activity">
    <molecule>Carbamoyl phosphate synthase small chain</molecule>
    <reaction evidence="1">
        <text>L-glutamine + H2O = L-glutamate + NH4(+)</text>
        <dbReference type="Rhea" id="RHEA:15889"/>
        <dbReference type="ChEBI" id="CHEBI:15377"/>
        <dbReference type="ChEBI" id="CHEBI:28938"/>
        <dbReference type="ChEBI" id="CHEBI:29985"/>
        <dbReference type="ChEBI" id="CHEBI:58359"/>
    </reaction>
</comment>
<comment type="pathway">
    <text evidence="1">Amino-acid biosynthesis; L-arginine biosynthesis; carbamoyl phosphate from bicarbonate: step 1/1.</text>
</comment>
<comment type="pathway">
    <text evidence="1">Pyrimidine metabolism; UMP biosynthesis via de novo pathway; (S)-dihydroorotate from bicarbonate: step 1/3.</text>
</comment>
<comment type="subunit">
    <text evidence="1">Composed of two chains; the small (or glutamine) chain promotes the hydrolysis of glutamine to ammonia, which is used by the large (or ammonia) chain to synthesize carbamoyl phosphate. Tetramer of heterodimers (alpha,beta)4.</text>
</comment>
<comment type="similarity">
    <text evidence="1">Belongs to the CarA family.</text>
</comment>
<gene>
    <name evidence="1" type="primary">carA</name>
    <name type="ordered locus">LIC_12466</name>
</gene>
<sequence length="363" mass="40262">MMKAFLVLDNGTIFEGESFGYETESVGEIVFNTSMAGYQEILTDPSYCNQIITLTYPMIGNYGIHPDNMESSKIQASGLIVKEYVDLPSNFKSEKTLSQFLKEYKIPAIQGIDTRKLTRFIRTNGSPNGGIFVASEYSPSFLEKVKSFPGIINADLAEVVTTSSKYIFGTHTGKKFKLAVYDYGVKTNILRLLDANGFAVTVYPAKTPSEEIMKEGTDAFFLSNGPGDPAPLDYAIASTQKIMEKRYPLFGICLGHQIIGLSLGKKTEKMKFGHRGGNQPVKNLETGQVEITSQNHGFAVIDDQKQDEPISFLNLNDHTVEGILKSGYPLLTVQYHPESAPGPNDSRYLFQKFYDLVEKTKKG</sequence>
<organism>
    <name type="scientific">Leptospira interrogans serogroup Icterohaemorrhagiae serovar copenhageni (strain Fiocruz L1-130)</name>
    <dbReference type="NCBI Taxonomy" id="267671"/>
    <lineage>
        <taxon>Bacteria</taxon>
        <taxon>Pseudomonadati</taxon>
        <taxon>Spirochaetota</taxon>
        <taxon>Spirochaetia</taxon>
        <taxon>Leptospirales</taxon>
        <taxon>Leptospiraceae</taxon>
        <taxon>Leptospira</taxon>
    </lineage>
</organism>
<keyword id="KW-0028">Amino-acid biosynthesis</keyword>
<keyword id="KW-0055">Arginine biosynthesis</keyword>
<keyword id="KW-0067">ATP-binding</keyword>
<keyword id="KW-0315">Glutamine amidotransferase</keyword>
<keyword id="KW-0436">Ligase</keyword>
<keyword id="KW-0547">Nucleotide-binding</keyword>
<keyword id="KW-0665">Pyrimidine biosynthesis</keyword>